<protein>
    <recommendedName>
        <fullName evidence="1">Chromosomal replication initiator protein DnaA</fullName>
    </recommendedName>
</protein>
<keyword id="KW-0067">ATP-binding</keyword>
<keyword id="KW-0963">Cytoplasm</keyword>
<keyword id="KW-0235">DNA replication</keyword>
<keyword id="KW-0238">DNA-binding</keyword>
<keyword id="KW-0446">Lipid-binding</keyword>
<keyword id="KW-0547">Nucleotide-binding</keyword>
<feature type="chain" id="PRO_1000079949" description="Chromosomal replication initiator protein DnaA">
    <location>
        <begin position="1"/>
        <end position="491"/>
    </location>
</feature>
<feature type="region of interest" description="Domain I, interacts with DnaA modulators" evidence="1">
    <location>
        <begin position="1"/>
        <end position="69"/>
    </location>
</feature>
<feature type="region of interest" description="Domain II" evidence="1">
    <location>
        <begin position="69"/>
        <end position="154"/>
    </location>
</feature>
<feature type="region of interest" description="Disordered" evidence="2">
    <location>
        <begin position="106"/>
        <end position="126"/>
    </location>
</feature>
<feature type="region of interest" description="Domain III, AAA+ region" evidence="1">
    <location>
        <begin position="155"/>
        <end position="371"/>
    </location>
</feature>
<feature type="region of interest" description="Domain IV, binds dsDNA" evidence="1">
    <location>
        <begin position="372"/>
        <end position="491"/>
    </location>
</feature>
<feature type="binding site" evidence="1">
    <location>
        <position position="199"/>
    </location>
    <ligand>
        <name>ATP</name>
        <dbReference type="ChEBI" id="CHEBI:30616"/>
    </ligand>
</feature>
<feature type="binding site" evidence="1">
    <location>
        <position position="201"/>
    </location>
    <ligand>
        <name>ATP</name>
        <dbReference type="ChEBI" id="CHEBI:30616"/>
    </ligand>
</feature>
<feature type="binding site" evidence="1">
    <location>
        <position position="202"/>
    </location>
    <ligand>
        <name>ATP</name>
        <dbReference type="ChEBI" id="CHEBI:30616"/>
    </ligand>
</feature>
<feature type="binding site" evidence="1">
    <location>
        <position position="203"/>
    </location>
    <ligand>
        <name>ATP</name>
        <dbReference type="ChEBI" id="CHEBI:30616"/>
    </ligand>
</feature>
<reference key="1">
    <citation type="submission" date="2007-12" db="EMBL/GenBank/DDBJ databases">
        <title>Complete sequence of chromosome of Francisella philomiragia subsp. philomiragia ATCC 25017.</title>
        <authorList>
            <consortium name="US DOE Joint Genome Institute"/>
            <person name="Copeland A."/>
            <person name="Lucas S."/>
            <person name="Lapidus A."/>
            <person name="Barry K."/>
            <person name="Detter J.C."/>
            <person name="Glavina del Rio T."/>
            <person name="Hammon N."/>
            <person name="Israni S."/>
            <person name="Dalin E."/>
            <person name="Tice H."/>
            <person name="Pitluck S."/>
            <person name="Chain P."/>
            <person name="Malfatti S."/>
            <person name="Shin M."/>
            <person name="Vergez L."/>
            <person name="Schmutz J."/>
            <person name="Larimer F."/>
            <person name="Land M."/>
            <person name="Hauser L."/>
            <person name="Richardson P."/>
        </authorList>
    </citation>
    <scope>NUCLEOTIDE SEQUENCE [LARGE SCALE GENOMIC DNA]</scope>
    <source>
        <strain>ATCC 25017 / CCUG 19701 / FSC 153 / O#319-036</strain>
    </source>
</reference>
<proteinExistence type="inferred from homology"/>
<evidence type="ECO:0000255" key="1">
    <source>
        <dbReference type="HAMAP-Rule" id="MF_00377"/>
    </source>
</evidence>
<evidence type="ECO:0000256" key="2">
    <source>
        <dbReference type="SAM" id="MobiDB-lite"/>
    </source>
</evidence>
<dbReference type="EMBL" id="CP000937">
    <property type="protein sequence ID" value="ABZ87065.1"/>
    <property type="molecule type" value="Genomic_DNA"/>
</dbReference>
<dbReference type="SMR" id="B0TWF7"/>
<dbReference type="KEGG" id="fph:Fphi_0842"/>
<dbReference type="eggNOG" id="COG0593">
    <property type="taxonomic scope" value="Bacteria"/>
</dbReference>
<dbReference type="HOGENOM" id="CLU_026910_3_1_6"/>
<dbReference type="GO" id="GO:0005737">
    <property type="term" value="C:cytoplasm"/>
    <property type="evidence" value="ECO:0007669"/>
    <property type="project" value="UniProtKB-SubCell"/>
</dbReference>
<dbReference type="GO" id="GO:0005886">
    <property type="term" value="C:plasma membrane"/>
    <property type="evidence" value="ECO:0007669"/>
    <property type="project" value="TreeGrafter"/>
</dbReference>
<dbReference type="GO" id="GO:0005524">
    <property type="term" value="F:ATP binding"/>
    <property type="evidence" value="ECO:0007669"/>
    <property type="project" value="UniProtKB-UniRule"/>
</dbReference>
<dbReference type="GO" id="GO:0016887">
    <property type="term" value="F:ATP hydrolysis activity"/>
    <property type="evidence" value="ECO:0007669"/>
    <property type="project" value="InterPro"/>
</dbReference>
<dbReference type="GO" id="GO:0003688">
    <property type="term" value="F:DNA replication origin binding"/>
    <property type="evidence" value="ECO:0007669"/>
    <property type="project" value="UniProtKB-UniRule"/>
</dbReference>
<dbReference type="GO" id="GO:0008289">
    <property type="term" value="F:lipid binding"/>
    <property type="evidence" value="ECO:0007669"/>
    <property type="project" value="UniProtKB-KW"/>
</dbReference>
<dbReference type="GO" id="GO:0006270">
    <property type="term" value="P:DNA replication initiation"/>
    <property type="evidence" value="ECO:0007669"/>
    <property type="project" value="UniProtKB-UniRule"/>
</dbReference>
<dbReference type="GO" id="GO:0006275">
    <property type="term" value="P:regulation of DNA replication"/>
    <property type="evidence" value="ECO:0007669"/>
    <property type="project" value="UniProtKB-UniRule"/>
</dbReference>
<dbReference type="CDD" id="cd00009">
    <property type="entry name" value="AAA"/>
    <property type="match status" value="1"/>
</dbReference>
<dbReference type="CDD" id="cd06571">
    <property type="entry name" value="Bac_DnaA_C"/>
    <property type="match status" value="1"/>
</dbReference>
<dbReference type="FunFam" id="3.40.50.300:FF:000668">
    <property type="entry name" value="Chromosomal replication initiator protein DnaA"/>
    <property type="match status" value="1"/>
</dbReference>
<dbReference type="Gene3D" id="1.10.1750.10">
    <property type="match status" value="1"/>
</dbReference>
<dbReference type="Gene3D" id="1.10.8.60">
    <property type="match status" value="1"/>
</dbReference>
<dbReference type="Gene3D" id="3.30.300.180">
    <property type="match status" value="1"/>
</dbReference>
<dbReference type="Gene3D" id="3.40.50.300">
    <property type="entry name" value="P-loop containing nucleotide triphosphate hydrolases"/>
    <property type="match status" value="1"/>
</dbReference>
<dbReference type="HAMAP" id="MF_00377">
    <property type="entry name" value="DnaA_bact"/>
    <property type="match status" value="1"/>
</dbReference>
<dbReference type="InterPro" id="IPR003593">
    <property type="entry name" value="AAA+_ATPase"/>
</dbReference>
<dbReference type="InterPro" id="IPR001957">
    <property type="entry name" value="Chromosome_initiator_DnaA"/>
</dbReference>
<dbReference type="InterPro" id="IPR020591">
    <property type="entry name" value="Chromosome_initiator_DnaA-like"/>
</dbReference>
<dbReference type="InterPro" id="IPR018312">
    <property type="entry name" value="Chromosome_initiator_DnaA_CS"/>
</dbReference>
<dbReference type="InterPro" id="IPR013159">
    <property type="entry name" value="DnaA_C"/>
</dbReference>
<dbReference type="InterPro" id="IPR013317">
    <property type="entry name" value="DnaA_dom"/>
</dbReference>
<dbReference type="InterPro" id="IPR024633">
    <property type="entry name" value="DnaA_N_dom"/>
</dbReference>
<dbReference type="InterPro" id="IPR038454">
    <property type="entry name" value="DnaA_N_sf"/>
</dbReference>
<dbReference type="InterPro" id="IPR027417">
    <property type="entry name" value="P-loop_NTPase"/>
</dbReference>
<dbReference type="InterPro" id="IPR010921">
    <property type="entry name" value="Trp_repressor/repl_initiator"/>
</dbReference>
<dbReference type="NCBIfam" id="TIGR00362">
    <property type="entry name" value="DnaA"/>
    <property type="match status" value="1"/>
</dbReference>
<dbReference type="PANTHER" id="PTHR30050">
    <property type="entry name" value="CHROMOSOMAL REPLICATION INITIATOR PROTEIN DNAA"/>
    <property type="match status" value="1"/>
</dbReference>
<dbReference type="PANTHER" id="PTHR30050:SF2">
    <property type="entry name" value="CHROMOSOMAL REPLICATION INITIATOR PROTEIN DNAA"/>
    <property type="match status" value="1"/>
</dbReference>
<dbReference type="Pfam" id="PF00308">
    <property type="entry name" value="Bac_DnaA"/>
    <property type="match status" value="1"/>
</dbReference>
<dbReference type="Pfam" id="PF08299">
    <property type="entry name" value="Bac_DnaA_C"/>
    <property type="match status" value="1"/>
</dbReference>
<dbReference type="Pfam" id="PF11638">
    <property type="entry name" value="DnaA_N"/>
    <property type="match status" value="1"/>
</dbReference>
<dbReference type="PRINTS" id="PR00051">
    <property type="entry name" value="DNAA"/>
</dbReference>
<dbReference type="SMART" id="SM00382">
    <property type="entry name" value="AAA"/>
    <property type="match status" value="1"/>
</dbReference>
<dbReference type="SMART" id="SM00760">
    <property type="entry name" value="Bac_DnaA_C"/>
    <property type="match status" value="1"/>
</dbReference>
<dbReference type="SUPFAM" id="SSF52540">
    <property type="entry name" value="P-loop containing nucleoside triphosphate hydrolases"/>
    <property type="match status" value="1"/>
</dbReference>
<dbReference type="SUPFAM" id="SSF48295">
    <property type="entry name" value="TrpR-like"/>
    <property type="match status" value="1"/>
</dbReference>
<dbReference type="PROSITE" id="PS01008">
    <property type="entry name" value="DNAA"/>
    <property type="match status" value="1"/>
</dbReference>
<accession>B0TWF7</accession>
<comment type="function">
    <text evidence="1">Plays an essential role in the initiation and regulation of chromosomal replication. ATP-DnaA binds to the origin of replication (oriC) to initiate formation of the DNA replication initiation complex once per cell cycle. Binds the DnaA box (a 9 base pair repeat at the origin) and separates the double-stranded (ds)DNA. Forms a right-handed helical filament on oriC DNA; dsDNA binds to the exterior of the filament while single-stranded (ss)DNA is stabiized in the filament's interior. The ATP-DnaA-oriC complex binds and stabilizes one strand of the AT-rich DNA unwinding element (DUE), permitting loading of DNA polymerase. After initiation quickly degrades to an ADP-DnaA complex that is not apt for DNA replication. Binds acidic phospholipids.</text>
</comment>
<comment type="subunit">
    <text evidence="1">Oligomerizes as a right-handed, spiral filament on DNA at oriC.</text>
</comment>
<comment type="subcellular location">
    <subcellularLocation>
        <location evidence="1">Cytoplasm</location>
    </subcellularLocation>
</comment>
<comment type="domain">
    <text evidence="1">Domain I is involved in oligomerization and binding regulators, domain II is flexibile and of varying length in different bacteria, domain III forms the AAA+ region, while domain IV binds dsDNA.</text>
</comment>
<comment type="similarity">
    <text evidence="1">Belongs to the DnaA family.</text>
</comment>
<organism>
    <name type="scientific">Francisella philomiragia subsp. philomiragia (strain ATCC 25017 / CCUG 19701 / FSC 153 / O#319-036)</name>
    <dbReference type="NCBI Taxonomy" id="484022"/>
    <lineage>
        <taxon>Bacteria</taxon>
        <taxon>Pseudomonadati</taxon>
        <taxon>Pseudomonadota</taxon>
        <taxon>Gammaproteobacteria</taxon>
        <taxon>Thiotrichales</taxon>
        <taxon>Francisellaceae</taxon>
        <taxon>Francisella</taxon>
    </lineage>
</organism>
<name>DNAA_FRAP2</name>
<sequence>MTTWNKCLKKLKKSLSTFEYKTWIKPIHVEQNNYLFTIYCNNEYFKKHIKSKYGEIISSTIQEFHDGDLLIEYSNKKFSGEKSPEVTSVGPQANFFNQKNVEIKDDSEETSLNQEPKKSQKKLSSKNSASQELFGFDEAMLITDKDDQEYSFGLPLKEKYVFDSFVVGDANKIARAAAMQVSINPGKLHNPLFIYGGSGLGKTHLMQAIGNHAREVNPNARIIYTNSEQFIKDYVNSIRLQDQDEFQRVYRSADILLIDDIQFIAGKEGTAQEFFHTFNALYENGKQIILTSDKYPNEIEGLEERLVSRFGYGLTVSVDMPDLETRIAILLKKAHDLGQKLPNETAAFIAENVRTNVRELEGALNRVLTTSKFNHKDPTIEVAQACLRDVIKIQEKKVKIDNIQKVVADFYRIRVKDLTSNQRSRNIARPRQIAMSLARELTSHSLPEIGNAFGGRDHTTVMHAVKAITKLRQSNTSISDDYELLLDKISR</sequence>
<gene>
    <name evidence="1" type="primary">dnaA</name>
    <name type="ordered locus">Fphi_0842</name>
</gene>